<accession>A7ZV74</accession>
<dbReference type="EMBL" id="CP000800">
    <property type="protein sequence ID" value="ABV16983.1"/>
    <property type="molecule type" value="Genomic_DNA"/>
</dbReference>
<dbReference type="RefSeq" id="WP_001196062.1">
    <property type="nucleotide sequence ID" value="NC_009801.1"/>
</dbReference>
<dbReference type="SMR" id="A7ZV74"/>
<dbReference type="GeneID" id="93777620"/>
<dbReference type="KEGG" id="ecw:EcE24377A_4764"/>
<dbReference type="HOGENOM" id="CLU_078938_4_1_6"/>
<dbReference type="Proteomes" id="UP000001122">
    <property type="component" value="Chromosome"/>
</dbReference>
<dbReference type="GO" id="GO:1990904">
    <property type="term" value="C:ribonucleoprotein complex"/>
    <property type="evidence" value="ECO:0007669"/>
    <property type="project" value="UniProtKB-KW"/>
</dbReference>
<dbReference type="GO" id="GO:0005840">
    <property type="term" value="C:ribosome"/>
    <property type="evidence" value="ECO:0007669"/>
    <property type="project" value="UniProtKB-KW"/>
</dbReference>
<dbReference type="GO" id="GO:0019843">
    <property type="term" value="F:rRNA binding"/>
    <property type="evidence" value="ECO:0007669"/>
    <property type="project" value="UniProtKB-UniRule"/>
</dbReference>
<dbReference type="GO" id="GO:0003735">
    <property type="term" value="F:structural constituent of ribosome"/>
    <property type="evidence" value="ECO:0007669"/>
    <property type="project" value="InterPro"/>
</dbReference>
<dbReference type="GO" id="GO:0006412">
    <property type="term" value="P:translation"/>
    <property type="evidence" value="ECO:0007669"/>
    <property type="project" value="UniProtKB-UniRule"/>
</dbReference>
<dbReference type="FunFam" id="3.10.430.100:FF:000001">
    <property type="entry name" value="50S ribosomal protein L9"/>
    <property type="match status" value="1"/>
</dbReference>
<dbReference type="FunFam" id="3.40.5.10:FF:000001">
    <property type="entry name" value="50S ribosomal protein L9"/>
    <property type="match status" value="1"/>
</dbReference>
<dbReference type="Gene3D" id="3.10.430.100">
    <property type="entry name" value="Ribosomal protein L9, C-terminal domain"/>
    <property type="match status" value="1"/>
</dbReference>
<dbReference type="Gene3D" id="3.40.5.10">
    <property type="entry name" value="Ribosomal protein L9, N-terminal domain"/>
    <property type="match status" value="1"/>
</dbReference>
<dbReference type="HAMAP" id="MF_00503">
    <property type="entry name" value="Ribosomal_bL9"/>
    <property type="match status" value="1"/>
</dbReference>
<dbReference type="InterPro" id="IPR000244">
    <property type="entry name" value="Ribosomal_bL9"/>
</dbReference>
<dbReference type="InterPro" id="IPR009027">
    <property type="entry name" value="Ribosomal_bL9/RNase_H1_N"/>
</dbReference>
<dbReference type="InterPro" id="IPR020594">
    <property type="entry name" value="Ribosomal_bL9_bac/chp"/>
</dbReference>
<dbReference type="InterPro" id="IPR020069">
    <property type="entry name" value="Ribosomal_bL9_C"/>
</dbReference>
<dbReference type="InterPro" id="IPR036791">
    <property type="entry name" value="Ribosomal_bL9_C_sf"/>
</dbReference>
<dbReference type="InterPro" id="IPR020070">
    <property type="entry name" value="Ribosomal_bL9_N"/>
</dbReference>
<dbReference type="InterPro" id="IPR036935">
    <property type="entry name" value="Ribosomal_bL9_N_sf"/>
</dbReference>
<dbReference type="NCBIfam" id="TIGR00158">
    <property type="entry name" value="L9"/>
    <property type="match status" value="1"/>
</dbReference>
<dbReference type="PANTHER" id="PTHR21368">
    <property type="entry name" value="50S RIBOSOMAL PROTEIN L9"/>
    <property type="match status" value="1"/>
</dbReference>
<dbReference type="Pfam" id="PF03948">
    <property type="entry name" value="Ribosomal_L9_C"/>
    <property type="match status" value="1"/>
</dbReference>
<dbReference type="Pfam" id="PF01281">
    <property type="entry name" value="Ribosomal_L9_N"/>
    <property type="match status" value="1"/>
</dbReference>
<dbReference type="SUPFAM" id="SSF55658">
    <property type="entry name" value="L9 N-domain-like"/>
    <property type="match status" value="1"/>
</dbReference>
<dbReference type="SUPFAM" id="SSF55653">
    <property type="entry name" value="Ribosomal protein L9 C-domain"/>
    <property type="match status" value="1"/>
</dbReference>
<dbReference type="PROSITE" id="PS00651">
    <property type="entry name" value="RIBOSOMAL_L9"/>
    <property type="match status" value="1"/>
</dbReference>
<comment type="function">
    <text evidence="1">Binds to the 23S rRNA.</text>
</comment>
<comment type="similarity">
    <text evidence="1">Belongs to the bacterial ribosomal protein bL9 family.</text>
</comment>
<organism>
    <name type="scientific">Escherichia coli O139:H28 (strain E24377A / ETEC)</name>
    <dbReference type="NCBI Taxonomy" id="331111"/>
    <lineage>
        <taxon>Bacteria</taxon>
        <taxon>Pseudomonadati</taxon>
        <taxon>Pseudomonadota</taxon>
        <taxon>Gammaproteobacteria</taxon>
        <taxon>Enterobacterales</taxon>
        <taxon>Enterobacteriaceae</taxon>
        <taxon>Escherichia</taxon>
    </lineage>
</organism>
<feature type="chain" id="PRO_1000060506" description="Large ribosomal subunit protein bL9">
    <location>
        <begin position="1"/>
        <end position="149"/>
    </location>
</feature>
<feature type="modified residue" description="N6-acetyllysine" evidence="1">
    <location>
        <position position="89"/>
    </location>
</feature>
<name>RL9_ECO24</name>
<reference key="1">
    <citation type="journal article" date="2008" name="J. Bacteriol.">
        <title>The pangenome structure of Escherichia coli: comparative genomic analysis of E. coli commensal and pathogenic isolates.</title>
        <authorList>
            <person name="Rasko D.A."/>
            <person name="Rosovitz M.J."/>
            <person name="Myers G.S.A."/>
            <person name="Mongodin E.F."/>
            <person name="Fricke W.F."/>
            <person name="Gajer P."/>
            <person name="Crabtree J."/>
            <person name="Sebaihia M."/>
            <person name="Thomson N.R."/>
            <person name="Chaudhuri R."/>
            <person name="Henderson I.R."/>
            <person name="Sperandio V."/>
            <person name="Ravel J."/>
        </authorList>
    </citation>
    <scope>NUCLEOTIDE SEQUENCE [LARGE SCALE GENOMIC DNA]</scope>
    <source>
        <strain>E24377A / ETEC</strain>
    </source>
</reference>
<proteinExistence type="inferred from homology"/>
<keyword id="KW-0007">Acetylation</keyword>
<keyword id="KW-1185">Reference proteome</keyword>
<keyword id="KW-0687">Ribonucleoprotein</keyword>
<keyword id="KW-0689">Ribosomal protein</keyword>
<keyword id="KW-0694">RNA-binding</keyword>
<keyword id="KW-0699">rRNA-binding</keyword>
<protein>
    <recommendedName>
        <fullName evidence="1">Large ribosomal subunit protein bL9</fullName>
    </recommendedName>
    <alternativeName>
        <fullName evidence="2">50S ribosomal protein L9</fullName>
    </alternativeName>
</protein>
<gene>
    <name evidence="1" type="primary">rplI</name>
    <name type="ordered locus">EcE24377A_4764</name>
</gene>
<sequence length="149" mass="15769">MQVILLDKVANLGSLGDQVNVKAGYARNFLVPQGKAVPATKKNIEFFEARRAELEAKLAEVLAAANARAEKINALETVTIASKAGDEGKLFGSIGTRDIADAVTAAGVEVAKSEVRLPNGVLRTTGEHEVSFQVHSEVFAKVIVNVVAE</sequence>
<evidence type="ECO:0000255" key="1">
    <source>
        <dbReference type="HAMAP-Rule" id="MF_00503"/>
    </source>
</evidence>
<evidence type="ECO:0000305" key="2"/>